<gene>
    <name evidence="1" type="primary">rpmC</name>
    <name type="ordered locus">BCAN_A1248</name>
</gene>
<organism>
    <name type="scientific">Brucella canis (strain ATCC 23365 / NCTC 10854 / RM-666)</name>
    <dbReference type="NCBI Taxonomy" id="483179"/>
    <lineage>
        <taxon>Bacteria</taxon>
        <taxon>Pseudomonadati</taxon>
        <taxon>Pseudomonadota</taxon>
        <taxon>Alphaproteobacteria</taxon>
        <taxon>Hyphomicrobiales</taxon>
        <taxon>Brucellaceae</taxon>
        <taxon>Brucella/Ochrobactrum group</taxon>
        <taxon>Brucella</taxon>
    </lineage>
</organism>
<accession>A9M5P2</accession>
<sequence>MKAADVRAKSLDQLNDELGTLKKEQFNLRFQKATGQLEKTARVKQVRRDIARIKTIARQKAAESKA</sequence>
<keyword id="KW-1185">Reference proteome</keyword>
<keyword id="KW-0687">Ribonucleoprotein</keyword>
<keyword id="KW-0689">Ribosomal protein</keyword>
<reference key="1">
    <citation type="submission" date="2007-10" db="EMBL/GenBank/DDBJ databases">
        <title>Brucella canis ATCC 23365 whole genome shotgun sequencing project.</title>
        <authorList>
            <person name="Setubal J.C."/>
            <person name="Bowns C."/>
            <person name="Boyle S."/>
            <person name="Crasta O.R."/>
            <person name="Czar M.J."/>
            <person name="Dharmanolla C."/>
            <person name="Gillespie J.J."/>
            <person name="Kenyon R.W."/>
            <person name="Lu J."/>
            <person name="Mane S."/>
            <person name="Mohapatra S."/>
            <person name="Nagrani S."/>
            <person name="Purkayastha A."/>
            <person name="Rajasimha H.K."/>
            <person name="Shallom J.M."/>
            <person name="Shallom S."/>
            <person name="Shukla M."/>
            <person name="Snyder E.E."/>
            <person name="Sobral B.W."/>
            <person name="Wattam A.R."/>
            <person name="Will R."/>
            <person name="Williams K."/>
            <person name="Yoo H."/>
            <person name="Bruce D."/>
            <person name="Detter C."/>
            <person name="Munk C."/>
            <person name="Brettin T.S."/>
        </authorList>
    </citation>
    <scope>NUCLEOTIDE SEQUENCE [LARGE SCALE GENOMIC DNA]</scope>
    <source>
        <strain>ATCC 23365 / NCTC 10854 / RM-666</strain>
    </source>
</reference>
<name>RL29_BRUC2</name>
<dbReference type="EMBL" id="CP000872">
    <property type="protein sequence ID" value="ABX62297.1"/>
    <property type="molecule type" value="Genomic_DNA"/>
</dbReference>
<dbReference type="RefSeq" id="WP_002964354.1">
    <property type="nucleotide sequence ID" value="NC_010103.1"/>
</dbReference>
<dbReference type="SMR" id="A9M5P2"/>
<dbReference type="GeneID" id="97533532"/>
<dbReference type="KEGG" id="bcs:BCAN_A1248"/>
<dbReference type="HOGENOM" id="CLU_158491_1_0_5"/>
<dbReference type="Proteomes" id="UP000001385">
    <property type="component" value="Chromosome I"/>
</dbReference>
<dbReference type="GO" id="GO:0022625">
    <property type="term" value="C:cytosolic large ribosomal subunit"/>
    <property type="evidence" value="ECO:0007669"/>
    <property type="project" value="TreeGrafter"/>
</dbReference>
<dbReference type="GO" id="GO:0003735">
    <property type="term" value="F:structural constituent of ribosome"/>
    <property type="evidence" value="ECO:0007669"/>
    <property type="project" value="InterPro"/>
</dbReference>
<dbReference type="GO" id="GO:0006412">
    <property type="term" value="P:translation"/>
    <property type="evidence" value="ECO:0007669"/>
    <property type="project" value="UniProtKB-UniRule"/>
</dbReference>
<dbReference type="CDD" id="cd00427">
    <property type="entry name" value="Ribosomal_L29_HIP"/>
    <property type="match status" value="1"/>
</dbReference>
<dbReference type="FunFam" id="1.10.287.310:FF:000001">
    <property type="entry name" value="50S ribosomal protein L29"/>
    <property type="match status" value="1"/>
</dbReference>
<dbReference type="Gene3D" id="1.10.287.310">
    <property type="match status" value="1"/>
</dbReference>
<dbReference type="HAMAP" id="MF_00374">
    <property type="entry name" value="Ribosomal_uL29"/>
    <property type="match status" value="1"/>
</dbReference>
<dbReference type="InterPro" id="IPR050063">
    <property type="entry name" value="Ribosomal_protein_uL29"/>
</dbReference>
<dbReference type="InterPro" id="IPR001854">
    <property type="entry name" value="Ribosomal_uL29"/>
</dbReference>
<dbReference type="InterPro" id="IPR018254">
    <property type="entry name" value="Ribosomal_uL29_CS"/>
</dbReference>
<dbReference type="InterPro" id="IPR036049">
    <property type="entry name" value="Ribosomal_uL29_sf"/>
</dbReference>
<dbReference type="NCBIfam" id="TIGR00012">
    <property type="entry name" value="L29"/>
    <property type="match status" value="1"/>
</dbReference>
<dbReference type="PANTHER" id="PTHR10916">
    <property type="entry name" value="60S RIBOSOMAL PROTEIN L35/50S RIBOSOMAL PROTEIN L29"/>
    <property type="match status" value="1"/>
</dbReference>
<dbReference type="PANTHER" id="PTHR10916:SF0">
    <property type="entry name" value="LARGE RIBOSOMAL SUBUNIT PROTEIN UL29C"/>
    <property type="match status" value="1"/>
</dbReference>
<dbReference type="Pfam" id="PF00831">
    <property type="entry name" value="Ribosomal_L29"/>
    <property type="match status" value="1"/>
</dbReference>
<dbReference type="SUPFAM" id="SSF46561">
    <property type="entry name" value="Ribosomal protein L29 (L29p)"/>
    <property type="match status" value="1"/>
</dbReference>
<dbReference type="PROSITE" id="PS00579">
    <property type="entry name" value="RIBOSOMAL_L29"/>
    <property type="match status" value="1"/>
</dbReference>
<protein>
    <recommendedName>
        <fullName evidence="1">Large ribosomal subunit protein uL29</fullName>
    </recommendedName>
    <alternativeName>
        <fullName evidence="2">50S ribosomal protein L29</fullName>
    </alternativeName>
</protein>
<proteinExistence type="inferred from homology"/>
<evidence type="ECO:0000255" key="1">
    <source>
        <dbReference type="HAMAP-Rule" id="MF_00374"/>
    </source>
</evidence>
<evidence type="ECO:0000305" key="2"/>
<comment type="similarity">
    <text evidence="1">Belongs to the universal ribosomal protein uL29 family.</text>
</comment>
<feature type="chain" id="PRO_1000079875" description="Large ribosomal subunit protein uL29">
    <location>
        <begin position="1"/>
        <end position="66"/>
    </location>
</feature>